<evidence type="ECO:0000250" key="1"/>
<evidence type="ECO:0000255" key="2"/>
<evidence type="ECO:0000256" key="3">
    <source>
        <dbReference type="SAM" id="MobiDB-lite"/>
    </source>
</evidence>
<evidence type="ECO:0000269" key="4">
    <source>
    </source>
</evidence>
<evidence type="ECO:0000269" key="5">
    <source>
    </source>
</evidence>
<evidence type="ECO:0000269" key="6">
    <source>
    </source>
</evidence>
<evidence type="ECO:0000269" key="7">
    <source>
    </source>
</evidence>
<evidence type="ECO:0000269" key="8">
    <source>
    </source>
</evidence>
<evidence type="ECO:0000303" key="9">
    <source>
    </source>
</evidence>
<evidence type="ECO:0000305" key="10"/>
<evidence type="ECO:0000312" key="11">
    <source>
        <dbReference type="Araport" id="AT5G23570"/>
    </source>
</evidence>
<evidence type="ECO:0000312" key="12">
    <source>
        <dbReference type="EMBL" id="BAA97244.1"/>
    </source>
</evidence>
<proteinExistence type="evidence at protein level"/>
<organism>
    <name type="scientific">Arabidopsis thaliana</name>
    <name type="common">Mouse-ear cress</name>
    <dbReference type="NCBI Taxonomy" id="3702"/>
    <lineage>
        <taxon>Eukaryota</taxon>
        <taxon>Viridiplantae</taxon>
        <taxon>Streptophyta</taxon>
        <taxon>Embryophyta</taxon>
        <taxon>Tracheophyta</taxon>
        <taxon>Spermatophyta</taxon>
        <taxon>Magnoliopsida</taxon>
        <taxon>eudicotyledons</taxon>
        <taxon>Gunneridae</taxon>
        <taxon>Pentapetalae</taxon>
        <taxon>rosids</taxon>
        <taxon>malvids</taxon>
        <taxon>Brassicales</taxon>
        <taxon>Brassicaceae</taxon>
        <taxon>Camelineae</taxon>
        <taxon>Arabidopsis</taxon>
    </lineage>
</organism>
<sequence length="625" mass="71972">MSSRAGPMSKEKNVQGGYRPEVEQLVQGLAGTRLASSQDDGGEWEVISKKNKNKPGNTSGKTWVSQNSNPPRAWGGQQQGRGSNVSGRGNNVSGRGNGNGRGIQANISGRGRALSRKYDNNFVAPPPVSRPPLEGGWNWQARGGSAQHTAVQEFPDVEDDVDNASEEENDSDALDDSDDDLASDDYDSDVSQKSHGSRKQNKWFKKFFGSLDSLSIEQINEPQRQWHCPACQNGPGAIDWYNLHPLLAHARTKGARRVKLHRELAEVLEKDLQMRGASVIPCGEIYGQWKGLGEDEKDYEIVWPPMVIIMNTRLDKDDNDKWLGMGNQELLEYFDKYEALRARHSYGPQGHRGMSVLMFESSATGYLEAERLHRELAEMGLDRIAWGQKRSMFSGGVRQLYGFLATKQDLDIFNQHSQGKTRLKFELKSYQEMVVKELRQISEDNQQLNYFKNKLSKQNKHAKVLEESLEIMSEKLRRTAEDNRIVRQRTKMQHEQNREEMDAHDRFFMDSIKQIHERRDAKEENFEMLQQQERAKVVGQQQQNINPSSNDDCRKRAEEVSSFIEFQEKEMEEFVEEREMLIKDQEKKMEDMKKRHHEEIFDLEKEFDEALEQLMYKHGLHNEDD</sequence>
<gene>
    <name evidence="9" type="primary">SGS3</name>
    <name evidence="11" type="ordered locus">At5g23570</name>
    <name evidence="12" type="ORF">MQM1.17</name>
</gene>
<dbReference type="EMBL" id="AF239719">
    <property type="protein sequence ID" value="AAF73960.1"/>
    <property type="molecule type" value="Genomic_DNA"/>
</dbReference>
<dbReference type="EMBL" id="AB025633">
    <property type="protein sequence ID" value="BAA97244.1"/>
    <property type="molecule type" value="Genomic_DNA"/>
</dbReference>
<dbReference type="EMBL" id="CP002688">
    <property type="protein sequence ID" value="AED93184.1"/>
    <property type="molecule type" value="Genomic_DNA"/>
</dbReference>
<dbReference type="EMBL" id="CP002688">
    <property type="protein sequence ID" value="ANM69842.1"/>
    <property type="molecule type" value="Genomic_DNA"/>
</dbReference>
<dbReference type="EMBL" id="BT002944">
    <property type="protein sequence ID" value="AAO22757.1"/>
    <property type="molecule type" value="mRNA"/>
</dbReference>
<dbReference type="EMBL" id="BT004380">
    <property type="protein sequence ID" value="AAO42374.1"/>
    <property type="molecule type" value="mRNA"/>
</dbReference>
<dbReference type="RefSeq" id="NP_001331491.1">
    <property type="nucleotide sequence ID" value="NM_001343817.1"/>
</dbReference>
<dbReference type="RefSeq" id="NP_197747.1">
    <property type="nucleotide sequence ID" value="NM_122263.3"/>
</dbReference>
<dbReference type="SMR" id="Q9LDX1"/>
<dbReference type="BioGRID" id="17697">
    <property type="interactions" value="1"/>
</dbReference>
<dbReference type="DIP" id="DIP-29658N"/>
<dbReference type="FunCoup" id="Q9LDX1">
    <property type="interactions" value="766"/>
</dbReference>
<dbReference type="IntAct" id="Q9LDX1">
    <property type="interactions" value="2"/>
</dbReference>
<dbReference type="MINT" id="Q9LDX1"/>
<dbReference type="STRING" id="3702.Q9LDX1"/>
<dbReference type="iPTMnet" id="Q9LDX1"/>
<dbReference type="PaxDb" id="3702-AT5G23570.1"/>
<dbReference type="ProteomicsDB" id="232652"/>
<dbReference type="EnsemblPlants" id="AT5G23570.1">
    <property type="protein sequence ID" value="AT5G23570.1"/>
    <property type="gene ID" value="AT5G23570"/>
</dbReference>
<dbReference type="EnsemblPlants" id="AT5G23570.3">
    <property type="protein sequence ID" value="AT5G23570.3"/>
    <property type="gene ID" value="AT5G23570"/>
</dbReference>
<dbReference type="GeneID" id="832422"/>
<dbReference type="Gramene" id="AT5G23570.1">
    <property type="protein sequence ID" value="AT5G23570.1"/>
    <property type="gene ID" value="AT5G23570"/>
</dbReference>
<dbReference type="Gramene" id="AT5G23570.3">
    <property type="protein sequence ID" value="AT5G23570.3"/>
    <property type="gene ID" value="AT5G23570"/>
</dbReference>
<dbReference type="KEGG" id="ath:AT5G23570"/>
<dbReference type="Araport" id="AT5G23570"/>
<dbReference type="TAIR" id="AT5G23570">
    <property type="gene designation" value="SGS3"/>
</dbReference>
<dbReference type="eggNOG" id="ENOG502QPU5">
    <property type="taxonomic scope" value="Eukaryota"/>
</dbReference>
<dbReference type="HOGENOM" id="CLU_020338_1_0_1"/>
<dbReference type="InParanoid" id="Q9LDX1"/>
<dbReference type="OMA" id="DWYNLQP"/>
<dbReference type="PhylomeDB" id="Q9LDX1"/>
<dbReference type="CD-CODE" id="4299E36E">
    <property type="entry name" value="Nucleolus"/>
</dbReference>
<dbReference type="CD-CODE" id="A9BEEE91">
    <property type="entry name" value="Sirna body"/>
</dbReference>
<dbReference type="PRO" id="PR:Q9LDX1"/>
<dbReference type="Proteomes" id="UP000006548">
    <property type="component" value="Chromosome 5"/>
</dbReference>
<dbReference type="ExpressionAtlas" id="Q9LDX1">
    <property type="expression patterns" value="baseline and differential"/>
</dbReference>
<dbReference type="GO" id="GO:0005737">
    <property type="term" value="C:cytoplasm"/>
    <property type="evidence" value="ECO:0000314"/>
    <property type="project" value="TAIR"/>
</dbReference>
<dbReference type="GO" id="GO:0036464">
    <property type="term" value="C:cytoplasmic ribonucleoprotein granule"/>
    <property type="evidence" value="ECO:0000314"/>
    <property type="project" value="FlyBase"/>
</dbReference>
<dbReference type="GO" id="GO:0010494">
    <property type="term" value="C:cytoplasmic stress granule"/>
    <property type="evidence" value="ECO:0000314"/>
    <property type="project" value="UniProtKB"/>
</dbReference>
<dbReference type="GO" id="GO:0005783">
    <property type="term" value="C:endoplasmic reticulum"/>
    <property type="evidence" value="ECO:0000314"/>
    <property type="project" value="TAIR"/>
</dbReference>
<dbReference type="GO" id="GO:0048471">
    <property type="term" value="C:perinuclear region of cytoplasm"/>
    <property type="evidence" value="ECO:0007669"/>
    <property type="project" value="UniProtKB-SubCell"/>
</dbReference>
<dbReference type="GO" id="GO:0003725">
    <property type="term" value="F:double-stranded RNA binding"/>
    <property type="evidence" value="ECO:0000314"/>
    <property type="project" value="FlyBase"/>
</dbReference>
<dbReference type="GO" id="GO:0140693">
    <property type="term" value="F:molecular condensate scaffold activity"/>
    <property type="evidence" value="ECO:0000315"/>
    <property type="project" value="FlyBase"/>
</dbReference>
<dbReference type="GO" id="GO:1905172">
    <property type="term" value="F:RISC complex binding"/>
    <property type="evidence" value="ECO:0000314"/>
    <property type="project" value="FlyBase"/>
</dbReference>
<dbReference type="GO" id="GO:0003723">
    <property type="term" value="F:RNA binding"/>
    <property type="evidence" value="ECO:0000314"/>
    <property type="project" value="FlyBase"/>
</dbReference>
<dbReference type="GO" id="GO:0045182">
    <property type="term" value="F:translation regulator activity"/>
    <property type="evidence" value="ECO:0000314"/>
    <property type="project" value="FlyBase"/>
</dbReference>
<dbReference type="GO" id="GO:0031625">
    <property type="term" value="F:ubiquitin protein ligase binding"/>
    <property type="evidence" value="ECO:0000353"/>
    <property type="project" value="UniProtKB"/>
</dbReference>
<dbReference type="GO" id="GO:0042742">
    <property type="term" value="P:defense response to bacterium"/>
    <property type="evidence" value="ECO:0000315"/>
    <property type="project" value="UniProtKB"/>
</dbReference>
<dbReference type="GO" id="GO:0051607">
    <property type="term" value="P:defense response to virus"/>
    <property type="evidence" value="ECO:0000315"/>
    <property type="project" value="TAIR"/>
</dbReference>
<dbReference type="GO" id="GO:0010286">
    <property type="term" value="P:heat acclimation"/>
    <property type="evidence" value="ECO:0000315"/>
    <property type="project" value="UniProtKB"/>
</dbReference>
<dbReference type="GO" id="GO:0035278">
    <property type="term" value="P:miRNA-mediated gene silencing by inhibition of translation"/>
    <property type="evidence" value="ECO:0000314"/>
    <property type="project" value="FlyBase"/>
</dbReference>
<dbReference type="GO" id="GO:1900248">
    <property type="term" value="P:negative regulation of cytoplasmic translational elongation"/>
    <property type="evidence" value="ECO:0000315"/>
    <property type="project" value="FlyBase"/>
</dbReference>
<dbReference type="GO" id="GO:0050688">
    <property type="term" value="P:regulation of defense response to virus"/>
    <property type="evidence" value="ECO:0007669"/>
    <property type="project" value="UniProtKB-KW"/>
</dbReference>
<dbReference type="GO" id="GO:2000028">
    <property type="term" value="P:regulation of photoperiodism, flowering"/>
    <property type="evidence" value="ECO:0000315"/>
    <property type="project" value="UniProtKB"/>
</dbReference>
<dbReference type="GO" id="GO:0070921">
    <property type="term" value="P:regulation of siRNA processing"/>
    <property type="evidence" value="ECO:0000315"/>
    <property type="project" value="UniProtKB"/>
</dbReference>
<dbReference type="GO" id="GO:0009408">
    <property type="term" value="P:response to heat"/>
    <property type="evidence" value="ECO:0000315"/>
    <property type="project" value="UniProtKB"/>
</dbReference>
<dbReference type="GO" id="GO:0009616">
    <property type="term" value="P:RNAi-mediated antiviral immune response"/>
    <property type="evidence" value="ECO:0000315"/>
    <property type="project" value="TAIR"/>
</dbReference>
<dbReference type="GO" id="GO:0030422">
    <property type="term" value="P:siRNA processing"/>
    <property type="evidence" value="ECO:0000315"/>
    <property type="project" value="FlyBase"/>
</dbReference>
<dbReference type="GO" id="GO:0010267">
    <property type="term" value="P:ta-siRNA processing"/>
    <property type="evidence" value="ECO:0000315"/>
    <property type="project" value="FlyBase"/>
</dbReference>
<dbReference type="GO" id="GO:0010050">
    <property type="term" value="P:vegetative phase change"/>
    <property type="evidence" value="ECO:0000315"/>
    <property type="project" value="TAIR"/>
</dbReference>
<dbReference type="GO" id="GO:0010025">
    <property type="term" value="P:wax biosynthetic process"/>
    <property type="evidence" value="ECO:0000316"/>
    <property type="project" value="TAIR"/>
</dbReference>
<dbReference type="CDD" id="cd12266">
    <property type="entry name" value="RRM_like_XS"/>
    <property type="match status" value="1"/>
</dbReference>
<dbReference type="FunFam" id="3.30.70.2890:FF:000002">
    <property type="entry name" value="XS domain-containing protein / XS zinc finger domain-containing protein-like protein"/>
    <property type="match status" value="1"/>
</dbReference>
<dbReference type="Gene3D" id="3.30.70.2890">
    <property type="entry name" value="XS domain"/>
    <property type="match status" value="1"/>
</dbReference>
<dbReference type="InterPro" id="IPR044287">
    <property type="entry name" value="SGS3"/>
</dbReference>
<dbReference type="InterPro" id="IPR005380">
    <property type="entry name" value="XS_domain"/>
</dbReference>
<dbReference type="InterPro" id="IPR038588">
    <property type="entry name" value="XS_domain_sf"/>
</dbReference>
<dbReference type="InterPro" id="IPR005381">
    <property type="entry name" value="Znf-XS_domain"/>
</dbReference>
<dbReference type="PANTHER" id="PTHR46602">
    <property type="entry name" value="PROTEIN SUPPRESSOR OF GENE SILENCING 3"/>
    <property type="match status" value="1"/>
</dbReference>
<dbReference type="PANTHER" id="PTHR46602:SF1">
    <property type="entry name" value="PROTEIN SUPPRESSOR OF GENE SILENCING 3"/>
    <property type="match status" value="1"/>
</dbReference>
<dbReference type="Pfam" id="PF03468">
    <property type="entry name" value="XS"/>
    <property type="match status" value="1"/>
</dbReference>
<dbReference type="Pfam" id="PF03470">
    <property type="entry name" value="zf-XS"/>
    <property type="match status" value="1"/>
</dbReference>
<accession>Q9LDX1</accession>
<keyword id="KW-0930">Antiviral protein</keyword>
<keyword id="KW-0175">Coiled coil</keyword>
<keyword id="KW-0963">Cytoplasm</keyword>
<keyword id="KW-0945">Host-virus interaction</keyword>
<keyword id="KW-0611">Plant defense</keyword>
<keyword id="KW-1185">Reference proteome</keyword>
<keyword id="KW-0943">RNA-mediated gene silencing</keyword>
<keyword id="KW-0346">Stress response</keyword>
<name>SGS3_ARATH</name>
<protein>
    <recommendedName>
        <fullName evidence="9">Protein SUPPRESSOR OF GENE SILENCING 3</fullName>
        <shortName evidence="9">AtSGS3</shortName>
    </recommendedName>
</protein>
<comment type="function">
    <text evidence="5 6 8">Required for post-transcriptional gene silencing and natural virus resistance. May bind nucleic acids and is essential for the biogenesis of trans-acting siRNAs but is not required for silencing induced by IR-PTGS. Involved in the juvenile-to-adult transition regulation. In case of begomoviruses infection, it is targeted by the viral protein V2 leading to suppression of post-transcriptional gene silencing. Involved in the mechanisms necessary for quick response to heat and subsequent heritable transgenerational memory of heat acclimation (global warming) such as early flowering and attenuated immunity; this process includes epigenetic regulation as well as post-transcriptional gene silencing (PTGS) (PubMed:30778176). In response to heat, HSFA2 is activated and promotes the expression of REF6 which in turn derepresses HSFA2, thus establishing an inheritable feedback loop able to trigger SGIP1 and subsequent SGIP1-mediated SGS3 degradation; this prevents the biosynthesis of trans-acting siRNA (tasiRNA) and leads to the release of HTT5, which drives early flowering but attenuates immunity (PubMed:30778176).</text>
</comment>
<comment type="subunit">
    <text evidence="7 8">Interacts with begomoviruses protein V2 (PubMed:18165314). Interacts with SGIP1 in cytoplasmic granules (PubMed:30778176).</text>
</comment>
<comment type="subcellular location">
    <subcellularLocation>
        <location evidence="7">Cytoplasm</location>
        <location evidence="7">Perinuclear region</location>
    </subcellularLocation>
    <subcellularLocation>
        <location evidence="8">Cytoplasmic granule</location>
    </subcellularLocation>
    <text evidence="1 7 8">Accumulates in inclusion bodies in the cell periphery (PubMed:18165314). May interact with the ER network from the perinuclear region out to the cell periphery (By similarity). Co-localizes with SGIP1 in cytoplasmic granules (PubMed:30778176).</text>
</comment>
<comment type="induction">
    <text evidence="8">Fades out in response to heat through an enhanced protein degradation (at protein level) triggered by the E3 ligase SGIP1-mediated ubiquitination.</text>
</comment>
<comment type="disruption phenotype">
    <text evidence="8">Early flowering and bolting at room temperature (22 degrees Celsius), lost sensitivity to heat and accumulation of FT, associated with reduced levels of TAS1-siRNAs (PubMed:30778176). Attenuated immunity leading to an increased susceptibility to the pathogenic bacteria Pst DC3000 (avrRpt2), with slightly reduced induction of ICS1 and salicylic acid (SA) levels upon pathogen infection (PubMed:30778176).</text>
</comment>
<comment type="similarity">
    <text evidence="10">Belongs to the SGS3 family.</text>
</comment>
<reference key="1">
    <citation type="journal article" date="2000" name="Cell">
        <title>Arabidopsis SGS2 and SGS3 genes are required for posttranscriptional gene silencing and natural virus resistance.</title>
        <authorList>
            <person name="Mourrain P."/>
            <person name="Beclin C."/>
            <person name="Elmayan T."/>
            <person name="Feuerbach F."/>
            <person name="Godon C."/>
            <person name="Morel J.-B."/>
            <person name="Jouette D."/>
            <person name="Lacombe A.-M."/>
            <person name="Nikic S."/>
            <person name="Picault N."/>
            <person name="Remoue K."/>
            <person name="Sanial M."/>
            <person name="Vo T.-A."/>
            <person name="Vaucheret H."/>
        </authorList>
    </citation>
    <scope>NUCLEOTIDE SEQUENCE [GENOMIC DNA]</scope>
    <scope>MUTAGENESIS OF GLU-500</scope>
</reference>
<reference key="2">
    <citation type="journal article" date="2000" name="DNA Res.">
        <title>Structural analysis of Arabidopsis thaliana chromosome 5. X. Sequence features of the regions of 3,076,755 bp covered by sixty P1 and TAC clones.</title>
        <authorList>
            <person name="Sato S."/>
            <person name="Nakamura Y."/>
            <person name="Kaneko T."/>
            <person name="Katoh T."/>
            <person name="Asamizu E."/>
            <person name="Kotani H."/>
            <person name="Tabata S."/>
        </authorList>
    </citation>
    <scope>NUCLEOTIDE SEQUENCE [LARGE SCALE GENOMIC DNA]</scope>
    <source>
        <strain>cv. Columbia</strain>
    </source>
</reference>
<reference key="3">
    <citation type="journal article" date="2017" name="Plant J.">
        <title>Araport11: a complete reannotation of the Arabidopsis thaliana reference genome.</title>
        <authorList>
            <person name="Cheng C.Y."/>
            <person name="Krishnakumar V."/>
            <person name="Chan A.P."/>
            <person name="Thibaud-Nissen F."/>
            <person name="Schobel S."/>
            <person name="Town C.D."/>
        </authorList>
    </citation>
    <scope>GENOME REANNOTATION</scope>
    <source>
        <strain>cv. Columbia</strain>
    </source>
</reference>
<reference key="4">
    <citation type="journal article" date="2003" name="Science">
        <title>Empirical analysis of transcriptional activity in the Arabidopsis genome.</title>
        <authorList>
            <person name="Yamada K."/>
            <person name="Lim J."/>
            <person name="Dale J.M."/>
            <person name="Chen H."/>
            <person name="Shinn P."/>
            <person name="Palm C.J."/>
            <person name="Southwick A.M."/>
            <person name="Wu H.C."/>
            <person name="Kim C.J."/>
            <person name="Nguyen M."/>
            <person name="Pham P.K."/>
            <person name="Cheuk R.F."/>
            <person name="Karlin-Newmann G."/>
            <person name="Liu S.X."/>
            <person name="Lam B."/>
            <person name="Sakano H."/>
            <person name="Wu T."/>
            <person name="Yu G."/>
            <person name="Miranda M."/>
            <person name="Quach H.L."/>
            <person name="Tripp M."/>
            <person name="Chang C.H."/>
            <person name="Lee J.M."/>
            <person name="Toriumi M.J."/>
            <person name="Chan M.M."/>
            <person name="Tang C.C."/>
            <person name="Onodera C.S."/>
            <person name="Deng J.M."/>
            <person name="Akiyama K."/>
            <person name="Ansari Y."/>
            <person name="Arakawa T."/>
            <person name="Banh J."/>
            <person name="Banno F."/>
            <person name="Bowser L."/>
            <person name="Brooks S.Y."/>
            <person name="Carninci P."/>
            <person name="Chao Q."/>
            <person name="Choy N."/>
            <person name="Enju A."/>
            <person name="Goldsmith A.D."/>
            <person name="Gurjal M."/>
            <person name="Hansen N.F."/>
            <person name="Hayashizaki Y."/>
            <person name="Johnson-Hopson C."/>
            <person name="Hsuan V.W."/>
            <person name="Iida K."/>
            <person name="Karnes M."/>
            <person name="Khan S."/>
            <person name="Koesema E."/>
            <person name="Ishida J."/>
            <person name="Jiang P.X."/>
            <person name="Jones T."/>
            <person name="Kawai J."/>
            <person name="Kamiya A."/>
            <person name="Meyers C."/>
            <person name="Nakajima M."/>
            <person name="Narusaka M."/>
            <person name="Seki M."/>
            <person name="Sakurai T."/>
            <person name="Satou M."/>
            <person name="Tamse R."/>
            <person name="Vaysberg M."/>
            <person name="Wallender E.K."/>
            <person name="Wong C."/>
            <person name="Yamamura Y."/>
            <person name="Yuan S."/>
            <person name="Shinozaki K."/>
            <person name="Davis R.W."/>
            <person name="Theologis A."/>
            <person name="Ecker J.R."/>
        </authorList>
    </citation>
    <scope>NUCLEOTIDE SEQUENCE [LARGE SCALE MRNA]</scope>
    <source>
        <strain>cv. Columbia</strain>
    </source>
</reference>
<reference key="5">
    <citation type="journal article" date="2002" name="BMC Bioinformatics">
        <title>The SGS3 protein involved in PTGS finds a family.</title>
        <authorList>
            <person name="Bateman A."/>
        </authorList>
    </citation>
    <scope>GENE FAMILY</scope>
</reference>
<reference key="6">
    <citation type="journal article" date="2004" name="Genes Dev.">
        <title>SGS3 and SGS2/SDE1/RDR6 are required for juvenile development and the production of trans-acting siRNAs in Arabidopsis.</title>
        <authorList>
            <person name="Peragine A."/>
            <person name="Yoshikawa M."/>
            <person name="Wu G."/>
            <person name="Albrecht H.L."/>
            <person name="Poethig R.S."/>
        </authorList>
    </citation>
    <scope>FUNCTION</scope>
</reference>
<reference key="7">
    <citation type="journal article" date="2004" name="Plant J.">
        <title>Geminivirus VIGS of endogenous genes requires SGS2/SDE1 and SGS3 and defines a new branch in the genetic pathway for silencing in plants.</title>
        <authorList>
            <person name="Muangsan N."/>
            <person name="Beclin C."/>
            <person name="Vaucheret H."/>
            <person name="Robertson D."/>
        </authorList>
    </citation>
    <scope>FUNCTION</scope>
</reference>
<reference key="8">
    <citation type="journal article" date="2008" name="Proc. Natl. Acad. Sci. U.S.A.">
        <title>Interaction with host SGS3 is required for suppression of RNA silencing by tomato yellow leaf curl virus V2 protein.</title>
        <authorList>
            <person name="Glick E."/>
            <person name="Zrachya A."/>
            <person name="Levy Y."/>
            <person name="Mett A."/>
            <person name="Gidoni D."/>
            <person name="Belausov E."/>
            <person name="Citovsky V."/>
            <person name="Gafni Y."/>
        </authorList>
    </citation>
    <scope>SUBCELLULAR LOCATION</scope>
    <scope>INTERACTION WITH TOMATO YELLOW LEAF CURL VIRUS PROTEIN V2</scope>
</reference>
<reference key="9">
    <citation type="journal article" date="2019" name="Cell Res.">
        <title>An H3K27me3 demethylase-HSFA2 regulatory loop orchestrates transgenerational thermomemory in Arabidopsis.</title>
        <authorList>
            <person name="Liu J."/>
            <person name="Feng L."/>
            <person name="Gu X."/>
            <person name="Deng X."/>
            <person name="Qiu Q."/>
            <person name="Li Q."/>
            <person name="Zhang Y."/>
            <person name="Wang M."/>
            <person name="Deng Y."/>
            <person name="Wang E."/>
            <person name="He Y."/>
            <person name="Baeurle I."/>
            <person name="Li J."/>
            <person name="Cao X."/>
            <person name="He Z."/>
        </authorList>
    </citation>
    <scope>FUNCTION</scope>
    <scope>DISRUPTION PHENOTYPE</scope>
    <scope>REPRESSION BY HEAT</scope>
    <scope>SUBCELLULAR LOCATION</scope>
    <scope>INTERACTION WITH SGIP1</scope>
    <source>
        <strain>cv. Columbia</strain>
    </source>
</reference>
<feature type="chain" id="PRO_0000333289" description="Protein SUPPRESSOR OF GENE SILENCING 3">
    <location>
        <begin position="1"/>
        <end position="625"/>
    </location>
</feature>
<feature type="region of interest" description="Disordered" evidence="3">
    <location>
        <begin position="1"/>
        <end position="20"/>
    </location>
</feature>
<feature type="region of interest" description="Disordered" evidence="3">
    <location>
        <begin position="30"/>
        <end position="148"/>
    </location>
</feature>
<feature type="region of interest" description="Disordered" evidence="3">
    <location>
        <begin position="161"/>
        <end position="195"/>
    </location>
</feature>
<feature type="coiled-coil region" evidence="2">
    <location>
        <begin position="452"/>
        <end position="533"/>
    </location>
</feature>
<feature type="coiled-coil region" evidence="2">
    <location>
        <begin position="564"/>
        <end position="615"/>
    </location>
</feature>
<feature type="compositionally biased region" description="Polar residues" evidence="3">
    <location>
        <begin position="54"/>
        <end position="70"/>
    </location>
</feature>
<feature type="compositionally biased region" description="Low complexity" evidence="3">
    <location>
        <begin position="80"/>
        <end position="94"/>
    </location>
</feature>
<feature type="compositionally biased region" description="Acidic residues" evidence="3">
    <location>
        <begin position="161"/>
        <end position="188"/>
    </location>
</feature>
<feature type="mutagenesis site" description="In sgs3-3; complete suppression of post-transcriptional gene silencing." evidence="4">
    <original>E</original>
    <variation>K</variation>
    <location>
        <position position="500"/>
    </location>
</feature>